<keyword id="KW-0677">Repeat</keyword>
<keyword id="KW-0808">Transferase</keyword>
<evidence type="ECO:0000255" key="1">
    <source>
        <dbReference type="HAMAP-Rule" id="MF_01525"/>
    </source>
</evidence>
<evidence type="ECO:0000256" key="2">
    <source>
        <dbReference type="SAM" id="MobiDB-lite"/>
    </source>
</evidence>
<reference key="1">
    <citation type="journal article" date="2011" name="J. Bacteriol.">
        <title>Comparative genomics of 28 Salmonella enterica isolates: evidence for CRISPR-mediated adaptive sublineage evolution.</title>
        <authorList>
            <person name="Fricke W.F."/>
            <person name="Mammel M.K."/>
            <person name="McDermott P.F."/>
            <person name="Tartera C."/>
            <person name="White D.G."/>
            <person name="Leclerc J.E."/>
            <person name="Ravel J."/>
            <person name="Cebula T.A."/>
        </authorList>
    </citation>
    <scope>NUCLEOTIDE SEQUENCE [LARGE SCALE GENOMIC DNA]</scope>
    <source>
        <strain>CVM19633</strain>
    </source>
</reference>
<proteinExistence type="inferred from homology"/>
<gene>
    <name evidence="1" type="primary">caiE</name>
    <name type="ordered locus">SeSA_A0077</name>
</gene>
<accession>B4TWR2</accession>
<comment type="function">
    <text evidence="1">Overproduction of CaiE stimulates the activity of CaiB and CaiD.</text>
</comment>
<comment type="pathway">
    <text evidence="1">Amine and polyamine metabolism; carnitine metabolism.</text>
</comment>
<comment type="similarity">
    <text evidence="1">Belongs to the transferase hexapeptide repeat family.</text>
</comment>
<feature type="chain" id="PRO_1000200937" description="Carnitine operon protein CaiE">
    <location>
        <begin position="1"/>
        <end position="198"/>
    </location>
</feature>
<feature type="region of interest" description="Disordered" evidence="2">
    <location>
        <begin position="179"/>
        <end position="198"/>
    </location>
</feature>
<feature type="compositionally biased region" description="Basic and acidic residues" evidence="2">
    <location>
        <begin position="180"/>
        <end position="198"/>
    </location>
</feature>
<sequence>MSYYAFEGLIPVVHPDAFVHPSAVLIGDVIVGAGVYIGPLASLRGDYGRLILEAGSNLQDGCIMHGYCDTDTIVHENGHIGHGAILHGCVVGRDALVGMNSVIMDGAVIGEESIVAAMSFVKAGFQGEARQLLVGSPARVLRQVTDQELHWKRLNTKEYQDLAIRCRTGLSETKPLTQVEENRPRLKGTTDVKPKSAQ</sequence>
<protein>
    <recommendedName>
        <fullName evidence="1">Carnitine operon protein CaiE</fullName>
    </recommendedName>
</protein>
<organism>
    <name type="scientific">Salmonella schwarzengrund (strain CVM19633)</name>
    <dbReference type="NCBI Taxonomy" id="439843"/>
    <lineage>
        <taxon>Bacteria</taxon>
        <taxon>Pseudomonadati</taxon>
        <taxon>Pseudomonadota</taxon>
        <taxon>Gammaproteobacteria</taxon>
        <taxon>Enterobacterales</taxon>
        <taxon>Enterobacteriaceae</taxon>
        <taxon>Salmonella</taxon>
    </lineage>
</organism>
<dbReference type="EMBL" id="CP001127">
    <property type="protein sequence ID" value="ACF89041.1"/>
    <property type="molecule type" value="Genomic_DNA"/>
</dbReference>
<dbReference type="RefSeq" id="WP_000122863.1">
    <property type="nucleotide sequence ID" value="NC_011094.1"/>
</dbReference>
<dbReference type="SMR" id="B4TWR2"/>
<dbReference type="KEGG" id="sew:SeSA_A0077"/>
<dbReference type="HOGENOM" id="CLU_064827_4_2_6"/>
<dbReference type="UniPathway" id="UPA00117"/>
<dbReference type="Proteomes" id="UP000001865">
    <property type="component" value="Chromosome"/>
</dbReference>
<dbReference type="GO" id="GO:0016740">
    <property type="term" value="F:transferase activity"/>
    <property type="evidence" value="ECO:0007669"/>
    <property type="project" value="UniProtKB-KW"/>
</dbReference>
<dbReference type="GO" id="GO:0009437">
    <property type="term" value="P:carnitine metabolic process"/>
    <property type="evidence" value="ECO:0007669"/>
    <property type="project" value="UniProtKB-UniRule"/>
</dbReference>
<dbReference type="CDD" id="cd04745">
    <property type="entry name" value="LbH_paaY_like"/>
    <property type="match status" value="1"/>
</dbReference>
<dbReference type="FunFam" id="2.160.10.10:FF:000012">
    <property type="entry name" value="Carnitine operon protein CaiE"/>
    <property type="match status" value="1"/>
</dbReference>
<dbReference type="Gene3D" id="2.160.10.10">
    <property type="entry name" value="Hexapeptide repeat proteins"/>
    <property type="match status" value="1"/>
</dbReference>
<dbReference type="HAMAP" id="MF_01525">
    <property type="entry name" value="CaiE"/>
    <property type="match status" value="1"/>
</dbReference>
<dbReference type="InterPro" id="IPR023446">
    <property type="entry name" value="CaiE"/>
</dbReference>
<dbReference type="InterPro" id="IPR001451">
    <property type="entry name" value="Hexapep"/>
</dbReference>
<dbReference type="InterPro" id="IPR050484">
    <property type="entry name" value="Transf_Hexapept/Carb_Anhydrase"/>
</dbReference>
<dbReference type="InterPro" id="IPR011004">
    <property type="entry name" value="Trimer_LpxA-like_sf"/>
</dbReference>
<dbReference type="NCBIfam" id="NF010150">
    <property type="entry name" value="PRK13627.1"/>
    <property type="match status" value="1"/>
</dbReference>
<dbReference type="PANTHER" id="PTHR13061">
    <property type="entry name" value="DYNACTIN SUBUNIT P25"/>
    <property type="match status" value="1"/>
</dbReference>
<dbReference type="PANTHER" id="PTHR13061:SF29">
    <property type="entry name" value="GAMMA CARBONIC ANHYDRASE-LIKE 1, MITOCHONDRIAL-RELATED"/>
    <property type="match status" value="1"/>
</dbReference>
<dbReference type="Pfam" id="PF00132">
    <property type="entry name" value="Hexapep"/>
    <property type="match status" value="2"/>
</dbReference>
<dbReference type="SUPFAM" id="SSF51161">
    <property type="entry name" value="Trimeric LpxA-like enzymes"/>
    <property type="match status" value="1"/>
</dbReference>
<name>CAIE_SALSV</name>